<organism>
    <name type="scientific">Listeria monocytogenes serotype 4b (strain CLIP80459)</name>
    <dbReference type="NCBI Taxonomy" id="568819"/>
    <lineage>
        <taxon>Bacteria</taxon>
        <taxon>Bacillati</taxon>
        <taxon>Bacillota</taxon>
        <taxon>Bacilli</taxon>
        <taxon>Bacillales</taxon>
        <taxon>Listeriaceae</taxon>
        <taxon>Listeria</taxon>
    </lineage>
</organism>
<protein>
    <recommendedName>
        <fullName evidence="1">Small ribosomal subunit protein uS4</fullName>
    </recommendedName>
    <alternativeName>
        <fullName evidence="3">30S ribosomal protein S4</fullName>
    </alternativeName>
</protein>
<name>RS4_LISMC</name>
<reference key="1">
    <citation type="journal article" date="2012" name="BMC Genomics">
        <title>Comparative genomics and transcriptomics of lineages I, II, and III strains of Listeria monocytogenes.</title>
        <authorList>
            <person name="Hain T."/>
            <person name="Ghai R."/>
            <person name="Billion A."/>
            <person name="Kuenne C.T."/>
            <person name="Steinweg C."/>
            <person name="Izar B."/>
            <person name="Mohamed W."/>
            <person name="Mraheil M."/>
            <person name="Domann E."/>
            <person name="Schaffrath S."/>
            <person name="Karst U."/>
            <person name="Goesmann A."/>
            <person name="Oehm S."/>
            <person name="Puhler A."/>
            <person name="Merkl R."/>
            <person name="Vorwerk S."/>
            <person name="Glaser P."/>
            <person name="Garrido P."/>
            <person name="Rusniok C."/>
            <person name="Buchrieser C."/>
            <person name="Goebel W."/>
            <person name="Chakraborty T."/>
        </authorList>
    </citation>
    <scope>NUCLEOTIDE SEQUENCE [LARGE SCALE GENOMIC DNA]</scope>
    <source>
        <strain>CLIP80459</strain>
    </source>
</reference>
<accession>C1KVP3</accession>
<proteinExistence type="inferred from homology"/>
<dbReference type="EMBL" id="FM242711">
    <property type="protein sequence ID" value="CAS05368.1"/>
    <property type="molecule type" value="Genomic_DNA"/>
</dbReference>
<dbReference type="RefSeq" id="WP_003762477.1">
    <property type="nucleotide sequence ID" value="NC_012488.1"/>
</dbReference>
<dbReference type="SMR" id="C1KVP3"/>
<dbReference type="GeneID" id="93235020"/>
<dbReference type="KEGG" id="lmc:Lm4b_01607"/>
<dbReference type="HOGENOM" id="CLU_092403_0_1_9"/>
<dbReference type="GO" id="GO:0015935">
    <property type="term" value="C:small ribosomal subunit"/>
    <property type="evidence" value="ECO:0007669"/>
    <property type="project" value="InterPro"/>
</dbReference>
<dbReference type="GO" id="GO:0019843">
    <property type="term" value="F:rRNA binding"/>
    <property type="evidence" value="ECO:0007669"/>
    <property type="project" value="UniProtKB-UniRule"/>
</dbReference>
<dbReference type="GO" id="GO:0003735">
    <property type="term" value="F:structural constituent of ribosome"/>
    <property type="evidence" value="ECO:0007669"/>
    <property type="project" value="InterPro"/>
</dbReference>
<dbReference type="GO" id="GO:0042274">
    <property type="term" value="P:ribosomal small subunit biogenesis"/>
    <property type="evidence" value="ECO:0007669"/>
    <property type="project" value="TreeGrafter"/>
</dbReference>
<dbReference type="GO" id="GO:0006412">
    <property type="term" value="P:translation"/>
    <property type="evidence" value="ECO:0007669"/>
    <property type="project" value="UniProtKB-UniRule"/>
</dbReference>
<dbReference type="CDD" id="cd00165">
    <property type="entry name" value="S4"/>
    <property type="match status" value="1"/>
</dbReference>
<dbReference type="FunFam" id="1.10.1050.10:FF:000001">
    <property type="entry name" value="30S ribosomal protein S4"/>
    <property type="match status" value="1"/>
</dbReference>
<dbReference type="FunFam" id="3.10.290.10:FF:000001">
    <property type="entry name" value="30S ribosomal protein S4"/>
    <property type="match status" value="1"/>
</dbReference>
<dbReference type="Gene3D" id="1.10.1050.10">
    <property type="entry name" value="Ribosomal Protein S4 Delta 41, Chain A, domain 1"/>
    <property type="match status" value="1"/>
</dbReference>
<dbReference type="Gene3D" id="3.10.290.10">
    <property type="entry name" value="RNA-binding S4 domain"/>
    <property type="match status" value="1"/>
</dbReference>
<dbReference type="HAMAP" id="MF_01306_B">
    <property type="entry name" value="Ribosomal_uS4_B"/>
    <property type="match status" value="1"/>
</dbReference>
<dbReference type="InterPro" id="IPR022801">
    <property type="entry name" value="Ribosomal_uS4"/>
</dbReference>
<dbReference type="InterPro" id="IPR005709">
    <property type="entry name" value="Ribosomal_uS4_bac-type"/>
</dbReference>
<dbReference type="InterPro" id="IPR018079">
    <property type="entry name" value="Ribosomal_uS4_CS"/>
</dbReference>
<dbReference type="InterPro" id="IPR001912">
    <property type="entry name" value="Ribosomal_uS4_N"/>
</dbReference>
<dbReference type="InterPro" id="IPR002942">
    <property type="entry name" value="S4_RNA-bd"/>
</dbReference>
<dbReference type="InterPro" id="IPR036986">
    <property type="entry name" value="S4_RNA-bd_sf"/>
</dbReference>
<dbReference type="NCBIfam" id="NF003717">
    <property type="entry name" value="PRK05327.1"/>
    <property type="match status" value="1"/>
</dbReference>
<dbReference type="NCBIfam" id="TIGR01017">
    <property type="entry name" value="rpsD_bact"/>
    <property type="match status" value="1"/>
</dbReference>
<dbReference type="PANTHER" id="PTHR11831">
    <property type="entry name" value="30S 40S RIBOSOMAL PROTEIN"/>
    <property type="match status" value="1"/>
</dbReference>
<dbReference type="PANTHER" id="PTHR11831:SF4">
    <property type="entry name" value="SMALL RIBOSOMAL SUBUNIT PROTEIN US4M"/>
    <property type="match status" value="1"/>
</dbReference>
<dbReference type="Pfam" id="PF00163">
    <property type="entry name" value="Ribosomal_S4"/>
    <property type="match status" value="1"/>
</dbReference>
<dbReference type="Pfam" id="PF01479">
    <property type="entry name" value="S4"/>
    <property type="match status" value="1"/>
</dbReference>
<dbReference type="SMART" id="SM01390">
    <property type="entry name" value="Ribosomal_S4"/>
    <property type="match status" value="1"/>
</dbReference>
<dbReference type="SMART" id="SM00363">
    <property type="entry name" value="S4"/>
    <property type="match status" value="1"/>
</dbReference>
<dbReference type="SUPFAM" id="SSF55174">
    <property type="entry name" value="Alpha-L RNA-binding motif"/>
    <property type="match status" value="1"/>
</dbReference>
<dbReference type="PROSITE" id="PS00632">
    <property type="entry name" value="RIBOSOMAL_S4"/>
    <property type="match status" value="1"/>
</dbReference>
<dbReference type="PROSITE" id="PS50889">
    <property type="entry name" value="S4"/>
    <property type="match status" value="1"/>
</dbReference>
<evidence type="ECO:0000255" key="1">
    <source>
        <dbReference type="HAMAP-Rule" id="MF_01306"/>
    </source>
</evidence>
<evidence type="ECO:0000256" key="2">
    <source>
        <dbReference type="SAM" id="MobiDB-lite"/>
    </source>
</evidence>
<evidence type="ECO:0000305" key="3"/>
<comment type="function">
    <text evidence="1">One of the primary rRNA binding proteins, it binds directly to 16S rRNA where it nucleates assembly of the body of the 30S subunit.</text>
</comment>
<comment type="function">
    <text evidence="1">With S5 and S12 plays an important role in translational accuracy.</text>
</comment>
<comment type="subunit">
    <text evidence="1">Part of the 30S ribosomal subunit. Contacts protein S5. The interaction surface between S4 and S5 is involved in control of translational fidelity.</text>
</comment>
<comment type="similarity">
    <text evidence="1">Belongs to the universal ribosomal protein uS4 family.</text>
</comment>
<keyword id="KW-0687">Ribonucleoprotein</keyword>
<keyword id="KW-0689">Ribosomal protein</keyword>
<keyword id="KW-0694">RNA-binding</keyword>
<keyword id="KW-0699">rRNA-binding</keyword>
<gene>
    <name evidence="1" type="primary">rpsD</name>
    <name type="ordered locus">Lm4b_01607</name>
</gene>
<feature type="chain" id="PRO_1000214295" description="Small ribosomal subunit protein uS4">
    <location>
        <begin position="1"/>
        <end position="200"/>
    </location>
</feature>
<feature type="domain" description="S4 RNA-binding" evidence="1">
    <location>
        <begin position="92"/>
        <end position="170"/>
    </location>
</feature>
<feature type="region of interest" description="Disordered" evidence="2">
    <location>
        <begin position="22"/>
        <end position="43"/>
    </location>
</feature>
<sequence length="200" mass="22680">MARYTGPSWKVSRRLGISLSGTGKELERRPYAPGQHGPTQRKKISEYGLQQAEKQKLRHMYGLTERQFKNTFNKAGKLQGKHGENFMILLEQRLDNIVYRLGLARTRRAARQLVNHGHITVDGKRVDIPSYQVSVGQVISVREKSAKNSAIAESLEVSSFVPEYVTFDAETLTGSLNRLPERSELAAEINEAFIVEFYSR</sequence>